<organism>
    <name type="scientific">Escherichia coli (strain K12)</name>
    <dbReference type="NCBI Taxonomy" id="83333"/>
    <lineage>
        <taxon>Bacteria</taxon>
        <taxon>Pseudomonadati</taxon>
        <taxon>Pseudomonadota</taxon>
        <taxon>Gammaproteobacteria</taxon>
        <taxon>Enterobacterales</taxon>
        <taxon>Enterobacteriaceae</taxon>
        <taxon>Escherichia</taxon>
    </lineage>
</organism>
<sequence>MQTQVLFEHPLNEKMRTWLRIEFLIQQLTVNLPIVDHAGALHFFRNVSELLDVFERGEVRTELLKELDRQQRKLQTWIGVPGVDQSRIEALIQQLKAAGSVLISAPRIGQFLREDRLIALVRQRLSIPGGCCSFDLPTLHIWLHLPQAQRDSQVETWIASLNPLTQALTMVLDLIRQSAPFRKQTSLNGFYQDNGGDADLLRLNLSLDSQLYPQISGHKSRFAIRFMPLDTENGQVPERLDFELACC</sequence>
<gene>
    <name evidence="1" type="primary">zapD</name>
    <name type="synonym">yacF</name>
    <name type="ordered locus">b0102</name>
    <name type="ordered locus">JW0099</name>
</gene>
<evidence type="ECO:0000255" key="1">
    <source>
        <dbReference type="HAMAP-Rule" id="MF_01092"/>
    </source>
</evidence>
<evidence type="ECO:0000269" key="2">
    <source>
    </source>
</evidence>
<evidence type="ECO:0000305" key="3"/>
<evidence type="ECO:0007829" key="4">
    <source>
        <dbReference type="PDB" id="5DKO"/>
    </source>
</evidence>
<keyword id="KW-0002">3D-structure</keyword>
<keyword id="KW-0131">Cell cycle</keyword>
<keyword id="KW-0132">Cell division</keyword>
<keyword id="KW-0963">Cytoplasm</keyword>
<keyword id="KW-1185">Reference proteome</keyword>
<keyword id="KW-0717">Septation</keyword>
<accession>P36680</accession>
<accession>P75645</accession>
<accession>Q8KJQ6</accession>
<accession>Q8KMZ7</accession>
<name>ZAPD_ECOLI</name>
<protein>
    <recommendedName>
        <fullName evidence="1">Cell division protein ZapD</fullName>
    </recommendedName>
    <alternativeName>
        <fullName evidence="1">Z ring-associated protein D</fullName>
    </alternativeName>
</protein>
<comment type="function">
    <text evidence="1 2">Cell division factor that enhances FtsZ-ring assembly. Directly interacts with FtsZ and promotes bundling of FtsZ protofilaments, with a reduction in FtsZ GTPase activity.</text>
</comment>
<comment type="subunit">
    <text evidence="2">Mostly homodimer in solution. Interacts with the C-terminal tail of FtsZ.</text>
</comment>
<comment type="interaction">
    <interactant intactId="EBI-1113728">
        <id>P36680</id>
    </interactant>
    <interactant intactId="EBI-370963">
        <id>P0A9A6</id>
        <label>ftsZ</label>
    </interactant>
    <organismsDiffer>false</organismsDiffer>
    <experiments>3</experiments>
</comment>
<comment type="interaction">
    <interactant intactId="EBI-1113728">
        <id>P36680</id>
    </interactant>
    <interactant intactId="EBI-1113728">
        <id>P36680</id>
        <label>zapD</label>
    </interactant>
    <organismsDiffer>false</organismsDiffer>
    <experiments>2</experiments>
</comment>
<comment type="subcellular location">
    <subcellularLocation>
        <location evidence="1 2">Cytoplasm</location>
    </subcellularLocation>
    <text>Localizes to mid-cell in an FtsZ-dependent manner. Localization does not require FtsA, ZipA, ZapA or ZapC.</text>
</comment>
<comment type="disruption phenotype">
    <text evidence="2">Mutants are viable, with no discernible division phenotypes.</text>
</comment>
<comment type="similarity">
    <text evidence="1">Belongs to the ZapD family.</text>
</comment>
<reference key="1">
    <citation type="journal article" date="1994" name="Nucleic Acids Res.">
        <title>Systematic sequencing of the Escherichia coli genome: analysis of the 2.4-4.1 min (110,917-193,643 bp) region.</title>
        <authorList>
            <person name="Fujita N."/>
            <person name="Mori H."/>
            <person name="Yura T."/>
            <person name="Ishihama A."/>
        </authorList>
    </citation>
    <scope>NUCLEOTIDE SEQUENCE [LARGE SCALE GENOMIC DNA]</scope>
    <source>
        <strain>K12 / W3110 / ATCC 27325 / DSM 5911</strain>
    </source>
</reference>
<reference key="2">
    <citation type="journal article" date="1997" name="Science">
        <title>The complete genome sequence of Escherichia coli K-12.</title>
        <authorList>
            <person name="Blattner F.R."/>
            <person name="Plunkett G. III"/>
            <person name="Bloch C.A."/>
            <person name="Perna N.T."/>
            <person name="Burland V."/>
            <person name="Riley M."/>
            <person name="Collado-Vides J."/>
            <person name="Glasner J.D."/>
            <person name="Rode C.K."/>
            <person name="Mayhew G.F."/>
            <person name="Gregor J."/>
            <person name="Davis N.W."/>
            <person name="Kirkpatrick H.A."/>
            <person name="Goeden M.A."/>
            <person name="Rose D.J."/>
            <person name="Mau B."/>
            <person name="Shao Y."/>
        </authorList>
    </citation>
    <scope>NUCLEOTIDE SEQUENCE [LARGE SCALE GENOMIC DNA]</scope>
    <source>
        <strain>K12 / MG1655 / ATCC 47076</strain>
    </source>
</reference>
<reference key="3">
    <citation type="journal article" date="2006" name="Mol. Syst. Biol.">
        <title>Highly accurate genome sequences of Escherichia coli K-12 strains MG1655 and W3110.</title>
        <authorList>
            <person name="Hayashi K."/>
            <person name="Morooka N."/>
            <person name="Yamamoto Y."/>
            <person name="Fujita K."/>
            <person name="Isono K."/>
            <person name="Choi S."/>
            <person name="Ohtsubo E."/>
            <person name="Baba T."/>
            <person name="Wanner B.L."/>
            <person name="Mori H."/>
            <person name="Horiuchi T."/>
        </authorList>
    </citation>
    <scope>NUCLEOTIDE SEQUENCE [LARGE SCALE GENOMIC DNA]</scope>
    <scope>SEQUENCE REVISION</scope>
    <source>
        <strain>K12 / W3110 / ATCC 27325 / DSM 5911</strain>
    </source>
</reference>
<reference key="4">
    <citation type="journal article" date="2012" name="J. Bacteriol.">
        <title>Identification of ZapD as a cell division factor that promotes the assembly of FtsZ in Escherichia coli.</title>
        <authorList>
            <person name="Durand-Heredia J."/>
            <person name="Rivkin E."/>
            <person name="Fan G."/>
            <person name="Morales J."/>
            <person name="Janakiraman A."/>
        </authorList>
    </citation>
    <scope>FUNCTION</scope>
    <scope>SUBUNIT</scope>
    <scope>INTERACTION WITH FTSZ</scope>
    <scope>SUBCELLULAR LOCATION</scope>
    <scope>DISRUPTION PHENOTYPE</scope>
    <scope>GENE NAME</scope>
    <source>
        <strain>K12 / MG1655 / ATCC 47076</strain>
    </source>
</reference>
<dbReference type="EMBL" id="U00096">
    <property type="protein sequence ID" value="AAC73213.1"/>
    <property type="molecule type" value="Genomic_DNA"/>
</dbReference>
<dbReference type="EMBL" id="AP009048">
    <property type="protein sequence ID" value="BAB96671.2"/>
    <property type="molecule type" value="Genomic_DNA"/>
</dbReference>
<dbReference type="PIR" id="F64732">
    <property type="entry name" value="F64732"/>
</dbReference>
<dbReference type="RefSeq" id="NP_414644.1">
    <property type="nucleotide sequence ID" value="NC_000913.3"/>
</dbReference>
<dbReference type="RefSeq" id="WP_001194734.1">
    <property type="nucleotide sequence ID" value="NZ_STEB01000010.1"/>
</dbReference>
<dbReference type="PDB" id="5DKO">
    <property type="method" value="X-ray"/>
    <property type="resolution" value="2.40 A"/>
    <property type="chains" value="A=1-247"/>
</dbReference>
<dbReference type="PDB" id="5IMJ">
    <property type="method" value="X-ray"/>
    <property type="resolution" value="3.10 A"/>
    <property type="chains" value="A/B=2-247"/>
</dbReference>
<dbReference type="PDB" id="5KOA">
    <property type="method" value="X-ray"/>
    <property type="resolution" value="2.67 A"/>
    <property type="chains" value="A/B=2-247"/>
</dbReference>
<dbReference type="PDBsum" id="5DKO"/>
<dbReference type="PDBsum" id="5IMJ"/>
<dbReference type="PDBsum" id="5KOA"/>
<dbReference type="SMR" id="P36680"/>
<dbReference type="BioGRID" id="4260784">
    <property type="interactions" value="7"/>
</dbReference>
<dbReference type="FunCoup" id="P36680">
    <property type="interactions" value="71"/>
</dbReference>
<dbReference type="IntAct" id="P36680">
    <property type="interactions" value="5"/>
</dbReference>
<dbReference type="STRING" id="511145.b0102"/>
<dbReference type="jPOST" id="P36680"/>
<dbReference type="PaxDb" id="511145-b0102"/>
<dbReference type="EnsemblBacteria" id="AAC73213">
    <property type="protein sequence ID" value="AAC73213"/>
    <property type="gene ID" value="b0102"/>
</dbReference>
<dbReference type="GeneID" id="93777333"/>
<dbReference type="GeneID" id="944873"/>
<dbReference type="KEGG" id="ecj:JW0099"/>
<dbReference type="KEGG" id="eco:b0102"/>
<dbReference type="KEGG" id="ecoc:C3026_00415"/>
<dbReference type="PATRIC" id="fig|1411691.4.peg.2179"/>
<dbReference type="EchoBASE" id="EB2219"/>
<dbReference type="eggNOG" id="COG4582">
    <property type="taxonomic scope" value="Bacteria"/>
</dbReference>
<dbReference type="HOGENOM" id="CLU_076303_0_0_6"/>
<dbReference type="InParanoid" id="P36680"/>
<dbReference type="OMA" id="LPAYYAW"/>
<dbReference type="OrthoDB" id="5294622at2"/>
<dbReference type="PhylomeDB" id="P36680"/>
<dbReference type="BioCyc" id="EcoCyc:EG12313-MONOMER"/>
<dbReference type="EvolutionaryTrace" id="P36680"/>
<dbReference type="PRO" id="PR:P36680"/>
<dbReference type="Proteomes" id="UP000000625">
    <property type="component" value="Chromosome"/>
</dbReference>
<dbReference type="GO" id="GO:0032153">
    <property type="term" value="C:cell division site"/>
    <property type="evidence" value="ECO:0000314"/>
    <property type="project" value="EcoCyc"/>
</dbReference>
<dbReference type="GO" id="GO:0005829">
    <property type="term" value="C:cytosol"/>
    <property type="evidence" value="ECO:0000314"/>
    <property type="project" value="EcoCyc"/>
</dbReference>
<dbReference type="GO" id="GO:0042802">
    <property type="term" value="F:identical protein binding"/>
    <property type="evidence" value="ECO:0000353"/>
    <property type="project" value="IntAct"/>
</dbReference>
<dbReference type="GO" id="GO:0042803">
    <property type="term" value="F:protein homodimerization activity"/>
    <property type="evidence" value="ECO:0000314"/>
    <property type="project" value="EcoCyc"/>
</dbReference>
<dbReference type="GO" id="GO:0000917">
    <property type="term" value="P:division septum assembly"/>
    <property type="evidence" value="ECO:0007669"/>
    <property type="project" value="UniProtKB-KW"/>
</dbReference>
<dbReference type="GO" id="GO:0043093">
    <property type="term" value="P:FtsZ-dependent cytokinesis"/>
    <property type="evidence" value="ECO:0000315"/>
    <property type="project" value="EcoCyc"/>
</dbReference>
<dbReference type="FunFam" id="1.10.3900.10:FF:000001">
    <property type="entry name" value="Cell division protein ZapD"/>
    <property type="match status" value="1"/>
</dbReference>
<dbReference type="FunFam" id="2.60.440.10:FF:000001">
    <property type="entry name" value="Cell division protein ZapD"/>
    <property type="match status" value="1"/>
</dbReference>
<dbReference type="Gene3D" id="1.10.3900.10">
    <property type="entry name" value="YacF-like"/>
    <property type="match status" value="1"/>
</dbReference>
<dbReference type="Gene3D" id="2.60.440.10">
    <property type="entry name" value="YacF-like domains"/>
    <property type="match status" value="1"/>
</dbReference>
<dbReference type="HAMAP" id="MF_01092">
    <property type="entry name" value="ZapD"/>
    <property type="match status" value="1"/>
</dbReference>
<dbReference type="InterPro" id="IPR009777">
    <property type="entry name" value="ZapD"/>
</dbReference>
<dbReference type="InterPro" id="IPR027462">
    <property type="entry name" value="ZapD_C"/>
</dbReference>
<dbReference type="InterPro" id="IPR036268">
    <property type="entry name" value="ZapD_sf"/>
</dbReference>
<dbReference type="NCBIfam" id="NF003653">
    <property type="entry name" value="PRK05287.1-1"/>
    <property type="match status" value="1"/>
</dbReference>
<dbReference type="NCBIfam" id="NF003655">
    <property type="entry name" value="PRK05287.1-3"/>
    <property type="match status" value="1"/>
</dbReference>
<dbReference type="PANTHER" id="PTHR39455">
    <property type="entry name" value="CELL DIVISION PROTEIN ZAPD"/>
    <property type="match status" value="1"/>
</dbReference>
<dbReference type="PANTHER" id="PTHR39455:SF1">
    <property type="entry name" value="CELL DIVISION PROTEIN ZAPD"/>
    <property type="match status" value="1"/>
</dbReference>
<dbReference type="Pfam" id="PF07072">
    <property type="entry name" value="ZapD"/>
    <property type="match status" value="1"/>
</dbReference>
<dbReference type="SUPFAM" id="SSF160950">
    <property type="entry name" value="YacF-like"/>
    <property type="match status" value="1"/>
</dbReference>
<proteinExistence type="evidence at protein level"/>
<feature type="chain" id="PRO_0000211667" description="Cell division protein ZapD">
    <location>
        <begin position="1"/>
        <end position="247"/>
    </location>
</feature>
<feature type="sequence conflict" description="In Ref. 1; no nucleotide entry." evidence="3" ref="1">
    <original>I</original>
    <variation>T</variation>
    <location>
        <position position="215"/>
    </location>
</feature>
<feature type="strand" evidence="4">
    <location>
        <begin position="6"/>
        <end position="12"/>
    </location>
</feature>
<feature type="helix" evidence="4">
    <location>
        <begin position="13"/>
        <end position="28"/>
    </location>
</feature>
<feature type="helix" evidence="4">
    <location>
        <begin position="37"/>
        <end position="55"/>
    </location>
</feature>
<feature type="helix" evidence="4">
    <location>
        <begin position="59"/>
        <end position="76"/>
    </location>
</feature>
<feature type="strand" evidence="4">
    <location>
        <begin position="78"/>
        <end position="80"/>
    </location>
</feature>
<feature type="helix" evidence="4">
    <location>
        <begin position="85"/>
        <end position="104"/>
    </location>
</feature>
<feature type="helix" evidence="4">
    <location>
        <begin position="110"/>
        <end position="114"/>
    </location>
</feature>
<feature type="helix" evidence="4">
    <location>
        <begin position="116"/>
        <end position="124"/>
    </location>
</feature>
<feature type="turn" evidence="4">
    <location>
        <begin position="128"/>
        <end position="131"/>
    </location>
</feature>
<feature type="turn" evidence="4">
    <location>
        <begin position="133"/>
        <end position="135"/>
    </location>
</feature>
<feature type="helix" evidence="4">
    <location>
        <begin position="137"/>
        <end position="142"/>
    </location>
</feature>
<feature type="helix" evidence="4">
    <location>
        <begin position="147"/>
        <end position="159"/>
    </location>
</feature>
<feature type="helix" evidence="4">
    <location>
        <begin position="162"/>
        <end position="175"/>
    </location>
</feature>
<feature type="strand" evidence="4">
    <location>
        <begin position="182"/>
        <end position="187"/>
    </location>
</feature>
<feature type="strand" evidence="4">
    <location>
        <begin position="190"/>
        <end position="194"/>
    </location>
</feature>
<feature type="strand" evidence="4">
    <location>
        <begin position="199"/>
        <end position="204"/>
    </location>
</feature>
<feature type="helix" evidence="4">
    <location>
        <begin position="207"/>
        <end position="209"/>
    </location>
</feature>
<feature type="strand" evidence="4">
    <location>
        <begin position="211"/>
        <end position="218"/>
    </location>
</feature>
<feature type="strand" evidence="4">
    <location>
        <begin position="221"/>
        <end position="233"/>
    </location>
</feature>
<feature type="strand" evidence="4">
    <location>
        <begin position="240"/>
        <end position="246"/>
    </location>
</feature>